<dbReference type="EC" id="3.1.3.68" evidence="1"/>
<dbReference type="EC" id="3.1.3.22" evidence="1"/>
<dbReference type="EC" id="3.1.3.50" evidence="1"/>
<dbReference type="EC" id="3.1.3.23" evidence="1"/>
<dbReference type="EMBL" id="AE005174">
    <property type="protein sequence ID" value="AAG56713.1"/>
    <property type="molecule type" value="Genomic_DNA"/>
</dbReference>
<dbReference type="EMBL" id="BA000007">
    <property type="protein sequence ID" value="BAB35856.1"/>
    <property type="molecule type" value="Genomic_DNA"/>
</dbReference>
<dbReference type="PIR" id="A98933">
    <property type="entry name" value="A98933"/>
</dbReference>
<dbReference type="PIR" id="E85781">
    <property type="entry name" value="E85781"/>
</dbReference>
<dbReference type="RefSeq" id="NP_310460.1">
    <property type="nucleotide sequence ID" value="NC_002695.1"/>
</dbReference>
<dbReference type="RefSeq" id="WP_000106834.1">
    <property type="nucleotide sequence ID" value="NZ_VOAI01000007.1"/>
</dbReference>
<dbReference type="SMR" id="Q7ADF8"/>
<dbReference type="STRING" id="155864.Z2756"/>
<dbReference type="DrugBank" id="DB02726">
    <property type="generic name" value="2-Phosphoglycolic Acid"/>
</dbReference>
<dbReference type="GeneID" id="912766"/>
<dbReference type="GeneID" id="93775940"/>
<dbReference type="KEGG" id="ece:Z2756"/>
<dbReference type="KEGG" id="ecs:ECs_2433"/>
<dbReference type="PATRIC" id="fig|386585.9.peg.2547"/>
<dbReference type="eggNOG" id="COG0637">
    <property type="taxonomic scope" value="Bacteria"/>
</dbReference>
<dbReference type="HOGENOM" id="CLU_045011_13_1_6"/>
<dbReference type="OMA" id="MGVWDQV"/>
<dbReference type="Proteomes" id="UP000000558">
    <property type="component" value="Chromosome"/>
</dbReference>
<dbReference type="Proteomes" id="UP000002519">
    <property type="component" value="Chromosome"/>
</dbReference>
<dbReference type="GO" id="GO:0003850">
    <property type="term" value="F:2-deoxyglucose-6-phosphatase activity"/>
    <property type="evidence" value="ECO:0000250"/>
    <property type="project" value="UniProtKB"/>
</dbReference>
<dbReference type="GO" id="GO:0004346">
    <property type="term" value="F:glucose-6-phosphatase activity"/>
    <property type="evidence" value="ECO:0000250"/>
    <property type="project" value="UniProtKB"/>
</dbReference>
<dbReference type="GO" id="GO:0000287">
    <property type="term" value="F:magnesium ion binding"/>
    <property type="evidence" value="ECO:0000250"/>
    <property type="project" value="UniProtKB"/>
</dbReference>
<dbReference type="GO" id="GO:0050084">
    <property type="term" value="F:mannitol-1-phosphatase activity"/>
    <property type="evidence" value="ECO:0007669"/>
    <property type="project" value="UniProtKB-EC"/>
</dbReference>
<dbReference type="GO" id="GO:0046872">
    <property type="term" value="F:metal ion binding"/>
    <property type="evidence" value="ECO:0000250"/>
    <property type="project" value="UniProtKB"/>
</dbReference>
<dbReference type="GO" id="GO:0050286">
    <property type="term" value="F:sorbitol-6-phosphatase activity"/>
    <property type="evidence" value="ECO:0007669"/>
    <property type="project" value="UniProtKB-EC"/>
</dbReference>
<dbReference type="GO" id="GO:0050308">
    <property type="term" value="F:sugar-phosphatase activity"/>
    <property type="evidence" value="ECO:0000250"/>
    <property type="project" value="UniProtKB"/>
</dbReference>
<dbReference type="CDD" id="cd07505">
    <property type="entry name" value="HAD_BPGM-like"/>
    <property type="match status" value="1"/>
</dbReference>
<dbReference type="FunFam" id="1.10.150.240:FF:000004">
    <property type="entry name" value="2-deoxyglucose-6-phosphate phosphatase YniC"/>
    <property type="match status" value="1"/>
</dbReference>
<dbReference type="FunFam" id="3.40.50.1000:FF:000036">
    <property type="entry name" value="HAD family hydrolase"/>
    <property type="match status" value="1"/>
</dbReference>
<dbReference type="Gene3D" id="3.40.50.1000">
    <property type="entry name" value="HAD superfamily/HAD-like"/>
    <property type="match status" value="1"/>
</dbReference>
<dbReference type="Gene3D" id="1.10.150.240">
    <property type="entry name" value="Putative phosphatase, domain 2"/>
    <property type="match status" value="1"/>
</dbReference>
<dbReference type="InterPro" id="IPR051600">
    <property type="entry name" value="Beta-PGM-like"/>
</dbReference>
<dbReference type="InterPro" id="IPR036412">
    <property type="entry name" value="HAD-like_sf"/>
</dbReference>
<dbReference type="InterPro" id="IPR006439">
    <property type="entry name" value="HAD-SF_hydro_IA"/>
</dbReference>
<dbReference type="InterPro" id="IPR023214">
    <property type="entry name" value="HAD_sf"/>
</dbReference>
<dbReference type="InterPro" id="IPR023198">
    <property type="entry name" value="PGP-like_dom2"/>
</dbReference>
<dbReference type="NCBIfam" id="TIGR01509">
    <property type="entry name" value="HAD-SF-IA-v3"/>
    <property type="match status" value="1"/>
</dbReference>
<dbReference type="NCBIfam" id="NF008087">
    <property type="entry name" value="PRK10826.1"/>
    <property type="match status" value="1"/>
</dbReference>
<dbReference type="PANTHER" id="PTHR46193">
    <property type="entry name" value="6-PHOSPHOGLUCONATE PHOSPHATASE"/>
    <property type="match status" value="1"/>
</dbReference>
<dbReference type="PANTHER" id="PTHR46193:SF18">
    <property type="entry name" value="HEXITOL PHOSPHATASE B"/>
    <property type="match status" value="1"/>
</dbReference>
<dbReference type="Pfam" id="PF00702">
    <property type="entry name" value="Hydrolase"/>
    <property type="match status" value="1"/>
</dbReference>
<dbReference type="PRINTS" id="PR00413">
    <property type="entry name" value="HADHALOGNASE"/>
</dbReference>
<dbReference type="SFLD" id="SFLDG01135">
    <property type="entry name" value="C1.5.6:_HAD__Beta-PGM__Phospha"/>
    <property type="match status" value="1"/>
</dbReference>
<dbReference type="SFLD" id="SFLDG01129">
    <property type="entry name" value="C1.5:_HAD__Beta-PGM__Phosphata"/>
    <property type="match status" value="1"/>
</dbReference>
<dbReference type="SUPFAM" id="SSF56784">
    <property type="entry name" value="HAD-like"/>
    <property type="match status" value="1"/>
</dbReference>
<evidence type="ECO:0000250" key="1">
    <source>
        <dbReference type="UniProtKB" id="P77247"/>
    </source>
</evidence>
<evidence type="ECO:0000250" key="2">
    <source>
        <dbReference type="UniProtKB" id="Q8CHP8"/>
    </source>
</evidence>
<evidence type="ECO:0000305" key="3"/>
<organism>
    <name type="scientific">Escherichia coli O157:H7</name>
    <dbReference type="NCBI Taxonomy" id="83334"/>
    <lineage>
        <taxon>Bacteria</taxon>
        <taxon>Pseudomonadati</taxon>
        <taxon>Pseudomonadota</taxon>
        <taxon>Gammaproteobacteria</taxon>
        <taxon>Enterobacterales</taxon>
        <taxon>Enterobacteriaceae</taxon>
        <taxon>Escherichia</taxon>
    </lineage>
</organism>
<sequence length="222" mass="24329">MSTPRQILAAIFDMDGLLIDSEPLWDRAELDVMASLGVDISRRNELPDTLGLRIDMVVDLWYARQPWNGPSRQEVVERVIARAISLVEETRPLLPGVREAVALCKEQGLLVGLASASPLHMLEKVLTMFDLRDSFDALASAEKLPYSKPHPQVYLDCAAKLGVDPLTCVALEDSVNGMIASKAARMRSIVVPAPEAQNDPRFVLANVKLSSLTELTAKDLLG</sequence>
<protein>
    <recommendedName>
        <fullName evidence="1">Hexitol phosphatase B</fullName>
    </recommendedName>
    <alternativeName>
        <fullName evidence="1">2-deoxyglucose-6-phosphate phosphatase</fullName>
        <ecNumber evidence="1">3.1.3.68</ecNumber>
    </alternativeName>
    <alternativeName>
        <fullName evidence="1">Mannitol-1-phosphatase</fullName>
        <ecNumber evidence="1">3.1.3.22</ecNumber>
    </alternativeName>
    <alternativeName>
        <fullName evidence="1">Sorbitol-6-phosphatase</fullName>
        <ecNumber evidence="1">3.1.3.50</ecNumber>
    </alternativeName>
    <alternativeName>
        <fullName evidence="1">Sugar-phosphatase</fullName>
        <ecNumber evidence="1">3.1.3.23</ecNumber>
    </alternativeName>
</protein>
<keyword id="KW-0119">Carbohydrate metabolism</keyword>
<keyword id="KW-0170">Cobalt</keyword>
<keyword id="KW-0378">Hydrolase</keyword>
<keyword id="KW-0460">Magnesium</keyword>
<keyword id="KW-0464">Manganese</keyword>
<keyword id="KW-0479">Metal-binding</keyword>
<keyword id="KW-1185">Reference proteome</keyword>
<keyword id="KW-0862">Zinc</keyword>
<gene>
    <name evidence="1" type="primary">hxpB</name>
    <name type="synonym">yniC</name>
    <name type="ordered locus">Z2756</name>
    <name type="ordered locus">ECs2433</name>
</gene>
<name>HXPB_ECO57</name>
<feature type="chain" id="PRO_0000108062" description="Hexitol phosphatase B">
    <location>
        <begin position="1"/>
        <end position="222"/>
    </location>
</feature>
<feature type="active site" description="Nucleophile" evidence="2">
    <location>
        <position position="13"/>
    </location>
</feature>
<feature type="active site" description="Proton donor" evidence="2">
    <location>
        <position position="15"/>
    </location>
</feature>
<feature type="binding site" evidence="1">
    <location>
        <begin position="13"/>
        <end position="15"/>
    </location>
    <ligand>
        <name>substrate</name>
    </ligand>
</feature>
<feature type="binding site" evidence="1">
    <location>
        <position position="13"/>
    </location>
    <ligand>
        <name>a divalent metal cation</name>
        <dbReference type="ChEBI" id="CHEBI:60240"/>
    </ligand>
</feature>
<feature type="binding site" evidence="1">
    <location>
        <position position="15"/>
    </location>
    <ligand>
        <name>a divalent metal cation</name>
        <dbReference type="ChEBI" id="CHEBI:60240"/>
    </ligand>
</feature>
<feature type="binding site" evidence="1">
    <location>
        <begin position="115"/>
        <end position="116"/>
    </location>
    <ligand>
        <name>substrate</name>
    </ligand>
</feature>
<feature type="binding site" evidence="1">
    <location>
        <position position="148"/>
    </location>
    <ligand>
        <name>substrate</name>
    </ligand>
</feature>
<feature type="binding site" evidence="1">
    <location>
        <position position="173"/>
    </location>
    <ligand>
        <name>a divalent metal cation</name>
        <dbReference type="ChEBI" id="CHEBI:60240"/>
    </ligand>
</feature>
<feature type="sequence conflict" description="In Ref. 1; AAG56713." evidence="3" ref="1">
    <original>A</original>
    <variation>S</variation>
    <location>
        <position position="205"/>
    </location>
</feature>
<proteinExistence type="inferred from homology"/>
<reference key="1">
    <citation type="journal article" date="2001" name="Nature">
        <title>Genome sequence of enterohaemorrhagic Escherichia coli O157:H7.</title>
        <authorList>
            <person name="Perna N.T."/>
            <person name="Plunkett G. III"/>
            <person name="Burland V."/>
            <person name="Mau B."/>
            <person name="Glasner J.D."/>
            <person name="Rose D.J."/>
            <person name="Mayhew G.F."/>
            <person name="Evans P.S."/>
            <person name="Gregor J."/>
            <person name="Kirkpatrick H.A."/>
            <person name="Posfai G."/>
            <person name="Hackett J."/>
            <person name="Klink S."/>
            <person name="Boutin A."/>
            <person name="Shao Y."/>
            <person name="Miller L."/>
            <person name="Grotbeck E.J."/>
            <person name="Davis N.W."/>
            <person name="Lim A."/>
            <person name="Dimalanta E.T."/>
            <person name="Potamousis K."/>
            <person name="Apodaca J."/>
            <person name="Anantharaman T.S."/>
            <person name="Lin J."/>
            <person name="Yen G."/>
            <person name="Schwartz D.C."/>
            <person name="Welch R.A."/>
            <person name="Blattner F.R."/>
        </authorList>
    </citation>
    <scope>NUCLEOTIDE SEQUENCE [LARGE SCALE GENOMIC DNA]</scope>
    <source>
        <strain>O157:H7 / EDL933 / ATCC 700927 / EHEC</strain>
    </source>
</reference>
<reference key="2">
    <citation type="journal article" date="2001" name="DNA Res.">
        <title>Complete genome sequence of enterohemorrhagic Escherichia coli O157:H7 and genomic comparison with a laboratory strain K-12.</title>
        <authorList>
            <person name="Hayashi T."/>
            <person name="Makino K."/>
            <person name="Ohnishi M."/>
            <person name="Kurokawa K."/>
            <person name="Ishii K."/>
            <person name="Yokoyama K."/>
            <person name="Han C.-G."/>
            <person name="Ohtsubo E."/>
            <person name="Nakayama K."/>
            <person name="Murata T."/>
            <person name="Tanaka M."/>
            <person name="Tobe T."/>
            <person name="Iida T."/>
            <person name="Takami H."/>
            <person name="Honda T."/>
            <person name="Sasakawa C."/>
            <person name="Ogasawara N."/>
            <person name="Yasunaga T."/>
            <person name="Kuhara S."/>
            <person name="Shiba T."/>
            <person name="Hattori M."/>
            <person name="Shinagawa H."/>
        </authorList>
    </citation>
    <scope>NUCLEOTIDE SEQUENCE [LARGE SCALE GENOMIC DNA]</scope>
    <source>
        <strain>O157:H7 / Sakai / RIMD 0509952 / EHEC</strain>
    </source>
</reference>
<accession>Q7ADF8</accession>
<accession>Q8XEJ5</accession>
<comment type="function">
    <text evidence="1">Sugar-phosphate phosphohydrolase that catalyzes the dephosphorylation of D-mannitol 1-phosphate and D-sorbitol 6-phosphate. Also catalyzes the dephosphorylation of 2-deoxyglucose 6-phosphate (2dGlu6P); this is a biologically important activity in vivo since it contributes to the elimination of this toxic compound and plays an important role in the resistance of E.coli to 2-deoxyglucose.</text>
</comment>
<comment type="catalytic activity">
    <reaction evidence="1">
        <text>sugar phosphate + H2O = sugar + phosphate.</text>
        <dbReference type="EC" id="3.1.3.23"/>
    </reaction>
</comment>
<comment type="catalytic activity">
    <reaction evidence="1">
        <text>2-deoxy-D-glucose 6-phosphate + H2O = 2-deoxy-D-glucose + phosphate</text>
        <dbReference type="Rhea" id="RHEA:22236"/>
        <dbReference type="ChEBI" id="CHEBI:15377"/>
        <dbReference type="ChEBI" id="CHEBI:43474"/>
        <dbReference type="ChEBI" id="CHEBI:84755"/>
        <dbReference type="ChEBI" id="CHEBI:84760"/>
        <dbReference type="EC" id="3.1.3.68"/>
    </reaction>
</comment>
<comment type="catalytic activity">
    <reaction evidence="1">
        <text>D-mannitol 1-phosphate + H2O = D-mannitol + phosphate</text>
        <dbReference type="Rhea" id="RHEA:19537"/>
        <dbReference type="ChEBI" id="CHEBI:15377"/>
        <dbReference type="ChEBI" id="CHEBI:16899"/>
        <dbReference type="ChEBI" id="CHEBI:43474"/>
        <dbReference type="ChEBI" id="CHEBI:61381"/>
        <dbReference type="EC" id="3.1.3.22"/>
    </reaction>
</comment>
<comment type="catalytic activity">
    <reaction evidence="1">
        <text>D-sorbitol 6-phosphate + H2O = D-sorbitol + phosphate</text>
        <dbReference type="Rhea" id="RHEA:24580"/>
        <dbReference type="ChEBI" id="CHEBI:15377"/>
        <dbReference type="ChEBI" id="CHEBI:17924"/>
        <dbReference type="ChEBI" id="CHEBI:43474"/>
        <dbReference type="ChEBI" id="CHEBI:60084"/>
        <dbReference type="EC" id="3.1.3.50"/>
    </reaction>
</comment>
<comment type="cofactor">
    <cofactor evidence="1">
        <name>Mg(2+)</name>
        <dbReference type="ChEBI" id="CHEBI:18420"/>
    </cofactor>
    <cofactor evidence="1">
        <name>Mn(2+)</name>
        <dbReference type="ChEBI" id="CHEBI:29035"/>
    </cofactor>
    <cofactor evidence="1">
        <name>Co(2+)</name>
        <dbReference type="ChEBI" id="CHEBI:48828"/>
    </cofactor>
    <cofactor evidence="1">
        <name>Zn(2+)</name>
        <dbReference type="ChEBI" id="CHEBI:29105"/>
    </cofactor>
    <text evidence="1">Requires the presence of a divalent metal cation for activity. Can use zinc, manganese, cobalt or magnesium.</text>
</comment>
<comment type="similarity">
    <text evidence="3">Belongs to the HAD-like hydrolase superfamily. CbbY/CbbZ/Gph/YieH family.</text>
</comment>